<protein>
    <recommendedName>
        <fullName evidence="1">NADPH-dependent 7-cyano-7-deazaguanine reductase</fullName>
        <ecNumber evidence="1">1.7.1.13</ecNumber>
    </recommendedName>
    <alternativeName>
        <fullName evidence="1">7-cyano-7-carbaguanine reductase</fullName>
    </alternativeName>
    <alternativeName>
        <fullName evidence="1">NADPH-dependent nitrile oxidoreductase</fullName>
    </alternativeName>
    <alternativeName>
        <fullName evidence="1">PreQ(0) reductase</fullName>
    </alternativeName>
</protein>
<accession>Q9JSR7</accession>
<accession>A1ITZ6</accession>
<feature type="chain" id="PRO_0000162981" description="NADPH-dependent 7-cyano-7-deazaguanine reductase">
    <location>
        <begin position="1"/>
        <end position="157"/>
    </location>
</feature>
<feature type="active site" description="Thioimide intermediate" evidence="1">
    <location>
        <position position="55"/>
    </location>
</feature>
<feature type="active site" description="Proton donor" evidence="1">
    <location>
        <position position="62"/>
    </location>
</feature>
<feature type="binding site" evidence="1">
    <location>
        <begin position="77"/>
        <end position="79"/>
    </location>
    <ligand>
        <name>substrate</name>
    </ligand>
</feature>
<feature type="binding site" evidence="1">
    <location>
        <begin position="96"/>
        <end position="97"/>
    </location>
    <ligand>
        <name>substrate</name>
    </ligand>
</feature>
<evidence type="ECO:0000255" key="1">
    <source>
        <dbReference type="HAMAP-Rule" id="MF_00818"/>
    </source>
</evidence>
<comment type="function">
    <text evidence="1">Catalyzes the NADPH-dependent reduction of 7-cyano-7-deazaguanine (preQ0) to 7-aminomethyl-7-deazaguanine (preQ1).</text>
</comment>
<comment type="catalytic activity">
    <reaction evidence="1">
        <text>7-aminomethyl-7-carbaguanine + 2 NADP(+) = 7-cyano-7-deazaguanine + 2 NADPH + 3 H(+)</text>
        <dbReference type="Rhea" id="RHEA:13409"/>
        <dbReference type="ChEBI" id="CHEBI:15378"/>
        <dbReference type="ChEBI" id="CHEBI:45075"/>
        <dbReference type="ChEBI" id="CHEBI:57783"/>
        <dbReference type="ChEBI" id="CHEBI:58349"/>
        <dbReference type="ChEBI" id="CHEBI:58703"/>
        <dbReference type="EC" id="1.7.1.13"/>
    </reaction>
</comment>
<comment type="pathway">
    <text evidence="1">tRNA modification; tRNA-queuosine biosynthesis.</text>
</comment>
<comment type="subcellular location">
    <subcellularLocation>
        <location evidence="1">Cytoplasm</location>
    </subcellularLocation>
</comment>
<comment type="similarity">
    <text evidence="1">Belongs to the GTP cyclohydrolase I family. QueF type 1 subfamily.</text>
</comment>
<name>QUEF_NEIMA</name>
<keyword id="KW-0963">Cytoplasm</keyword>
<keyword id="KW-0521">NADP</keyword>
<keyword id="KW-0560">Oxidoreductase</keyword>
<keyword id="KW-0671">Queuosine biosynthesis</keyword>
<dbReference type="EC" id="1.7.1.13" evidence="1"/>
<dbReference type="EMBL" id="AL157959">
    <property type="protein sequence ID" value="CAM09265.1"/>
    <property type="molecule type" value="Genomic_DNA"/>
</dbReference>
<dbReference type="PIR" id="G81789">
    <property type="entry name" value="G81789"/>
</dbReference>
<dbReference type="RefSeq" id="WP_002228968.1">
    <property type="nucleotide sequence ID" value="NC_003116.1"/>
</dbReference>
<dbReference type="SMR" id="Q9JSR7"/>
<dbReference type="EnsemblBacteria" id="CAM09265">
    <property type="protein sequence ID" value="CAM09265"/>
    <property type="gene ID" value="NMA2170"/>
</dbReference>
<dbReference type="GeneID" id="93387409"/>
<dbReference type="KEGG" id="nma:NMA2170"/>
<dbReference type="HOGENOM" id="CLU_102489_0_1_4"/>
<dbReference type="UniPathway" id="UPA00392"/>
<dbReference type="Proteomes" id="UP000000626">
    <property type="component" value="Chromosome"/>
</dbReference>
<dbReference type="GO" id="GO:0005737">
    <property type="term" value="C:cytoplasm"/>
    <property type="evidence" value="ECO:0007669"/>
    <property type="project" value="UniProtKB-SubCell"/>
</dbReference>
<dbReference type="GO" id="GO:0033739">
    <property type="term" value="F:preQ1 synthase activity"/>
    <property type="evidence" value="ECO:0007669"/>
    <property type="project" value="UniProtKB-UniRule"/>
</dbReference>
<dbReference type="GO" id="GO:0008616">
    <property type="term" value="P:queuosine biosynthetic process"/>
    <property type="evidence" value="ECO:0007669"/>
    <property type="project" value="UniProtKB-UniRule"/>
</dbReference>
<dbReference type="GO" id="GO:0006400">
    <property type="term" value="P:tRNA modification"/>
    <property type="evidence" value="ECO:0007669"/>
    <property type="project" value="UniProtKB-UniRule"/>
</dbReference>
<dbReference type="Gene3D" id="3.30.1130.10">
    <property type="match status" value="1"/>
</dbReference>
<dbReference type="HAMAP" id="MF_00818">
    <property type="entry name" value="QueF_type1"/>
    <property type="match status" value="1"/>
</dbReference>
<dbReference type="InterPro" id="IPR043133">
    <property type="entry name" value="GTP-CH-I_C/QueF"/>
</dbReference>
<dbReference type="InterPro" id="IPR050084">
    <property type="entry name" value="NADPH_dep_7-cyano-7-deazaG_red"/>
</dbReference>
<dbReference type="InterPro" id="IPR029500">
    <property type="entry name" value="QueF"/>
</dbReference>
<dbReference type="InterPro" id="IPR016856">
    <property type="entry name" value="QueF_type1"/>
</dbReference>
<dbReference type="NCBIfam" id="TIGR03139">
    <property type="entry name" value="QueF-II"/>
    <property type="match status" value="1"/>
</dbReference>
<dbReference type="PANTHER" id="PTHR34354">
    <property type="entry name" value="NADPH-DEPENDENT 7-CYANO-7-DEAZAGUANINE REDUCTASE"/>
    <property type="match status" value="1"/>
</dbReference>
<dbReference type="PANTHER" id="PTHR34354:SF1">
    <property type="entry name" value="NADPH-DEPENDENT 7-CYANO-7-DEAZAGUANINE REDUCTASE"/>
    <property type="match status" value="1"/>
</dbReference>
<dbReference type="Pfam" id="PF14489">
    <property type="entry name" value="QueF"/>
    <property type="match status" value="1"/>
</dbReference>
<dbReference type="PIRSF" id="PIRSF027377">
    <property type="entry name" value="Nitrile_oxidored_QueF"/>
    <property type="match status" value="1"/>
</dbReference>
<dbReference type="SUPFAM" id="SSF55620">
    <property type="entry name" value="Tetrahydrobiopterin biosynthesis enzymes-like"/>
    <property type="match status" value="1"/>
</dbReference>
<sequence length="157" mass="18092">MSRNTEELQGISLLGNQKTRYPTGYAPEILEAFDNKHPDNDYFVKFVCPEFTSLCPMTGQPDFATIYIRYIPHIKMVESKSLKLYLFSFRNHGDFHEDCVNIIMKDLIALMDPKYIEVFGEFTPRGGIAIHPFANYGKAGTEFEALARKRLFEHDAQ</sequence>
<proteinExistence type="inferred from homology"/>
<reference key="1">
    <citation type="journal article" date="2000" name="Nature">
        <title>Complete DNA sequence of a serogroup A strain of Neisseria meningitidis Z2491.</title>
        <authorList>
            <person name="Parkhill J."/>
            <person name="Achtman M."/>
            <person name="James K.D."/>
            <person name="Bentley S.D."/>
            <person name="Churcher C.M."/>
            <person name="Klee S.R."/>
            <person name="Morelli G."/>
            <person name="Basham D."/>
            <person name="Brown D."/>
            <person name="Chillingworth T."/>
            <person name="Davies R.M."/>
            <person name="Davis P."/>
            <person name="Devlin K."/>
            <person name="Feltwell T."/>
            <person name="Hamlin N."/>
            <person name="Holroyd S."/>
            <person name="Jagels K."/>
            <person name="Leather S."/>
            <person name="Moule S."/>
            <person name="Mungall K.L."/>
            <person name="Quail M.A."/>
            <person name="Rajandream M.A."/>
            <person name="Rutherford K.M."/>
            <person name="Simmonds M."/>
            <person name="Skelton J."/>
            <person name="Whitehead S."/>
            <person name="Spratt B.G."/>
            <person name="Barrell B.G."/>
        </authorList>
    </citation>
    <scope>NUCLEOTIDE SEQUENCE [LARGE SCALE GENOMIC DNA]</scope>
    <source>
        <strain>DSM 15465 / Z2491</strain>
    </source>
</reference>
<organism>
    <name type="scientific">Neisseria meningitidis serogroup A / serotype 4A (strain DSM 15465 / Z2491)</name>
    <dbReference type="NCBI Taxonomy" id="122587"/>
    <lineage>
        <taxon>Bacteria</taxon>
        <taxon>Pseudomonadati</taxon>
        <taxon>Pseudomonadota</taxon>
        <taxon>Betaproteobacteria</taxon>
        <taxon>Neisseriales</taxon>
        <taxon>Neisseriaceae</taxon>
        <taxon>Neisseria</taxon>
    </lineage>
</organism>
<gene>
    <name evidence="1" type="primary">queF</name>
    <name type="ordered locus">NMA2170</name>
</gene>